<protein>
    <recommendedName>
        <fullName>Mitochondrial inner membrane protease subunit 2</fullName>
        <ecNumber>3.4.21.-</ecNumber>
    </recommendedName>
</protein>
<accession>P46972</accession>
<accession>D6VZL0</accession>
<name>IMP2_YEAST</name>
<reference key="1">
    <citation type="journal article" date="1993" name="Science">
        <title>A mitochondrial protease with two catalytic subunits of nonoverlapping specificities.</title>
        <authorList>
            <person name="Nunnari J."/>
            <person name="Fox T.D."/>
            <person name="Walter P."/>
        </authorList>
    </citation>
    <scope>NUCLEOTIDE SEQUENCE [GENOMIC DNA]</scope>
</reference>
<reference key="2">
    <citation type="journal article" date="1997" name="Nature">
        <title>The nucleotide sequence of Saccharomyces cerevisiae chromosome XIII.</title>
        <authorList>
            <person name="Bowman S."/>
            <person name="Churcher C.M."/>
            <person name="Badcock K."/>
            <person name="Brown D."/>
            <person name="Chillingworth T."/>
            <person name="Connor R."/>
            <person name="Dedman K."/>
            <person name="Devlin K."/>
            <person name="Gentles S."/>
            <person name="Hamlin N."/>
            <person name="Hunt S."/>
            <person name="Jagels K."/>
            <person name="Lye G."/>
            <person name="Moule S."/>
            <person name="Odell C."/>
            <person name="Pearson D."/>
            <person name="Rajandream M.A."/>
            <person name="Rice P."/>
            <person name="Skelton J."/>
            <person name="Walsh S.V."/>
            <person name="Whitehead S."/>
            <person name="Barrell B.G."/>
        </authorList>
    </citation>
    <scope>NUCLEOTIDE SEQUENCE [LARGE SCALE GENOMIC DNA]</scope>
    <source>
        <strain>ATCC 204508 / S288c</strain>
    </source>
</reference>
<reference key="3">
    <citation type="journal article" date="2014" name="G3 (Bethesda)">
        <title>The reference genome sequence of Saccharomyces cerevisiae: Then and now.</title>
        <authorList>
            <person name="Engel S.R."/>
            <person name="Dietrich F.S."/>
            <person name="Fisk D.G."/>
            <person name="Binkley G."/>
            <person name="Balakrishnan R."/>
            <person name="Costanzo M.C."/>
            <person name="Dwight S.S."/>
            <person name="Hitz B.C."/>
            <person name="Karra K."/>
            <person name="Nash R.S."/>
            <person name="Weng S."/>
            <person name="Wong E.D."/>
            <person name="Lloyd P."/>
            <person name="Skrzypek M.S."/>
            <person name="Miyasato S.R."/>
            <person name="Simison M."/>
            <person name="Cherry J.M."/>
        </authorList>
    </citation>
    <scope>GENOME REANNOTATION</scope>
    <source>
        <strain>ATCC 204508 / S288c</strain>
    </source>
</reference>
<reference key="4">
    <citation type="journal article" date="2007" name="Genome Res.">
        <title>Approaching a complete repository of sequence-verified protein-encoding clones for Saccharomyces cerevisiae.</title>
        <authorList>
            <person name="Hu Y."/>
            <person name="Rolfs A."/>
            <person name="Bhullar B."/>
            <person name="Murthy T.V.S."/>
            <person name="Zhu C."/>
            <person name="Berger M.F."/>
            <person name="Camargo A.A."/>
            <person name="Kelley F."/>
            <person name="McCarron S."/>
            <person name="Jepson D."/>
            <person name="Richardson A."/>
            <person name="Raphael J."/>
            <person name="Moreira D."/>
            <person name="Taycher E."/>
            <person name="Zuo D."/>
            <person name="Mohr S."/>
            <person name="Kane M.F."/>
            <person name="Williamson J."/>
            <person name="Simpson A.J.G."/>
            <person name="Bulyk M.L."/>
            <person name="Harlow E."/>
            <person name="Marsischky G."/>
            <person name="Kolodner R.D."/>
            <person name="LaBaer J."/>
        </authorList>
    </citation>
    <scope>NUCLEOTIDE SEQUENCE [GENOMIC DNA]</scope>
    <source>
        <strain>ATCC 204508 / S288c</strain>
    </source>
</reference>
<reference key="5">
    <citation type="journal article" date="1994" name="J. Biol. Chem.">
        <title>Purified inner membrane protease I of yeast mitochondria is a heterodimer.</title>
        <authorList>
            <person name="Schneider A."/>
            <person name="Oppliger W."/>
            <person name="Jenoe P."/>
        </authorList>
    </citation>
    <scope>PROTEIN SEQUENCE OF 51-62</scope>
    <scope>SUBUNIT</scope>
</reference>
<reference key="6">
    <citation type="journal article" date="1999" name="J. Biol. Chem.">
        <title>Signal peptides having standard and nonstandard cleavage sites can be processed by Imp1p of the mitochondrial inner membrane protease.</title>
        <authorList>
            <person name="Chen X."/>
            <person name="Van Valkenburgh C."/>
            <person name="Fang H."/>
            <person name="Green N."/>
        </authorList>
    </citation>
    <scope>MUTAGENESIS OF SER-41; LYS-91; ASP-124 AND ASP-131</scope>
</reference>
<reference key="7">
    <citation type="journal article" date="2004" name="Mol. Genet. Genomics">
        <title>The mitochondrial IMP peptidase of yeast: functional analysis of domains and identification of Gut2 as a new natural substrate.</title>
        <authorList>
            <person name="Esser K."/>
            <person name="Jan P.S."/>
            <person name="Pratje E."/>
            <person name="Michaelis G."/>
        </authorList>
    </citation>
    <scope>FUNCTION</scope>
    <scope>MUTAGENESIS OF GLY-95 AND GLY-123</scope>
</reference>
<sequence length="177" mass="19930">MFRAGSSKRFLRNTLIAISWVPVLLTINNNVVHIAQVKGTSMQPTLNPQTETLATDWVLLWKFGVKNPSNLSRDDIILFKAPTNPRKVYCKRVKGLPFDTIDTKFPYPKPQVNLPRGHIWVEGDNYFHSIDSNTFGPISSGLVIGKAITIVWPPSRWGTDLKLSTGRDCISKRAILE</sequence>
<dbReference type="EC" id="3.4.21.-"/>
<dbReference type="EMBL" id="Z49213">
    <property type="protein sequence ID" value="CAA89151.1"/>
    <property type="molecule type" value="Genomic_DNA"/>
</dbReference>
<dbReference type="EMBL" id="AY692994">
    <property type="protein sequence ID" value="AAT93013.1"/>
    <property type="molecule type" value="Genomic_DNA"/>
</dbReference>
<dbReference type="EMBL" id="BK006946">
    <property type="protein sequence ID" value="DAA09934.1"/>
    <property type="molecule type" value="Genomic_DNA"/>
</dbReference>
<dbReference type="PIR" id="S53952">
    <property type="entry name" value="S53952"/>
</dbReference>
<dbReference type="RefSeq" id="NP_013749.1">
    <property type="nucleotide sequence ID" value="NM_001182532.1"/>
</dbReference>
<dbReference type="SMR" id="P46972"/>
<dbReference type="BioGRID" id="35207">
    <property type="interactions" value="316"/>
</dbReference>
<dbReference type="ComplexPortal" id="CPX-1892">
    <property type="entry name" value="Mitochondrial inner membrane peptidase complex"/>
</dbReference>
<dbReference type="DIP" id="DIP-1941N"/>
<dbReference type="FunCoup" id="P46972">
    <property type="interactions" value="468"/>
</dbReference>
<dbReference type="IntAct" id="P46972">
    <property type="interactions" value="4"/>
</dbReference>
<dbReference type="MINT" id="P46972"/>
<dbReference type="STRING" id="4932.YMR035W"/>
<dbReference type="MEROPS" id="S26.012"/>
<dbReference type="TCDB" id="9.B.391.1.1">
    <property type="family name" value="the eukaryotic inner membrane peptidase complex (impc) family"/>
</dbReference>
<dbReference type="PaxDb" id="4932-YMR035W"/>
<dbReference type="PeptideAtlas" id="P46972"/>
<dbReference type="EnsemblFungi" id="YMR035W_mRNA">
    <property type="protein sequence ID" value="YMR035W"/>
    <property type="gene ID" value="YMR035W"/>
</dbReference>
<dbReference type="GeneID" id="855051"/>
<dbReference type="KEGG" id="sce:YMR035W"/>
<dbReference type="AGR" id="SGD:S000004638"/>
<dbReference type="SGD" id="S000004638">
    <property type="gene designation" value="IMP2"/>
</dbReference>
<dbReference type="VEuPathDB" id="FungiDB:YMR035W"/>
<dbReference type="eggNOG" id="KOG1568">
    <property type="taxonomic scope" value="Eukaryota"/>
</dbReference>
<dbReference type="GeneTree" id="ENSGT00550000075044"/>
<dbReference type="HOGENOM" id="CLU_028723_4_1_1"/>
<dbReference type="InParanoid" id="P46972"/>
<dbReference type="OMA" id="WIPVIAW"/>
<dbReference type="OrthoDB" id="9996127at2759"/>
<dbReference type="BioCyc" id="YEAST:G3O-32740-MONOMER"/>
<dbReference type="CD-CODE" id="E03F929F">
    <property type="entry name" value="Stress granule"/>
</dbReference>
<dbReference type="PRO" id="PR:P46972"/>
<dbReference type="Proteomes" id="UP000002311">
    <property type="component" value="Chromosome XIII"/>
</dbReference>
<dbReference type="RNAct" id="P46972">
    <property type="molecule type" value="protein"/>
</dbReference>
<dbReference type="GO" id="GO:0005743">
    <property type="term" value="C:mitochondrial inner membrane"/>
    <property type="evidence" value="ECO:0000303"/>
    <property type="project" value="ComplexPortal"/>
</dbReference>
<dbReference type="GO" id="GO:0042720">
    <property type="term" value="C:mitochondrial inner membrane peptidase complex"/>
    <property type="evidence" value="ECO:0000353"/>
    <property type="project" value="SGD"/>
</dbReference>
<dbReference type="GO" id="GO:0004175">
    <property type="term" value="F:endopeptidase activity"/>
    <property type="evidence" value="ECO:0000314"/>
    <property type="project" value="SGD"/>
</dbReference>
<dbReference type="GO" id="GO:0004252">
    <property type="term" value="F:serine-type endopeptidase activity"/>
    <property type="evidence" value="ECO:0007669"/>
    <property type="project" value="InterPro"/>
</dbReference>
<dbReference type="GO" id="GO:0006627">
    <property type="term" value="P:protein processing involved in protein targeting to mitochondrion"/>
    <property type="evidence" value="ECO:0000315"/>
    <property type="project" value="SGD"/>
</dbReference>
<dbReference type="GO" id="GO:0006465">
    <property type="term" value="P:signal peptide processing"/>
    <property type="evidence" value="ECO:0000303"/>
    <property type="project" value="ComplexPortal"/>
</dbReference>
<dbReference type="CDD" id="cd06530">
    <property type="entry name" value="S26_SPase_I"/>
    <property type="match status" value="1"/>
</dbReference>
<dbReference type="FunFam" id="2.10.109.10:FF:000005">
    <property type="entry name" value="Mitochondrial inner membrane protease subunit"/>
    <property type="match status" value="1"/>
</dbReference>
<dbReference type="Gene3D" id="2.10.109.10">
    <property type="entry name" value="Umud Fragment, subunit A"/>
    <property type="match status" value="1"/>
</dbReference>
<dbReference type="InterPro" id="IPR037730">
    <property type="entry name" value="IMP2"/>
</dbReference>
<dbReference type="InterPro" id="IPR036286">
    <property type="entry name" value="LexA/Signal_pep-like_sf"/>
</dbReference>
<dbReference type="InterPro" id="IPR000223">
    <property type="entry name" value="Pept_S26A_signal_pept_1"/>
</dbReference>
<dbReference type="InterPro" id="IPR019758">
    <property type="entry name" value="Pept_S26A_signal_pept_1_CS"/>
</dbReference>
<dbReference type="InterPro" id="IPR019756">
    <property type="entry name" value="Pept_S26A_signal_pept_1_Ser-AS"/>
</dbReference>
<dbReference type="InterPro" id="IPR019533">
    <property type="entry name" value="Peptidase_S26"/>
</dbReference>
<dbReference type="PANTHER" id="PTHR46041">
    <property type="entry name" value="MITOCHONDRIAL INNER MEMBRANE PROTEASE SUBUNIT 2"/>
    <property type="match status" value="1"/>
</dbReference>
<dbReference type="PANTHER" id="PTHR46041:SF2">
    <property type="entry name" value="MITOCHONDRIAL INNER MEMBRANE PROTEASE SUBUNIT 2"/>
    <property type="match status" value="1"/>
</dbReference>
<dbReference type="Pfam" id="PF10502">
    <property type="entry name" value="Peptidase_S26"/>
    <property type="match status" value="2"/>
</dbReference>
<dbReference type="PRINTS" id="PR00727">
    <property type="entry name" value="LEADERPTASE"/>
</dbReference>
<dbReference type="SUPFAM" id="SSF51306">
    <property type="entry name" value="LexA/Signal peptidase"/>
    <property type="match status" value="1"/>
</dbReference>
<dbReference type="PROSITE" id="PS00501">
    <property type="entry name" value="SPASE_I_1"/>
    <property type="match status" value="1"/>
</dbReference>
<dbReference type="PROSITE" id="PS00761">
    <property type="entry name" value="SPASE_I_3"/>
    <property type="match status" value="1"/>
</dbReference>
<organism>
    <name type="scientific">Saccharomyces cerevisiae (strain ATCC 204508 / S288c)</name>
    <name type="common">Baker's yeast</name>
    <dbReference type="NCBI Taxonomy" id="559292"/>
    <lineage>
        <taxon>Eukaryota</taxon>
        <taxon>Fungi</taxon>
        <taxon>Dikarya</taxon>
        <taxon>Ascomycota</taxon>
        <taxon>Saccharomycotina</taxon>
        <taxon>Saccharomycetes</taxon>
        <taxon>Saccharomycetales</taxon>
        <taxon>Saccharomycetaceae</taxon>
        <taxon>Saccharomyces</taxon>
    </lineage>
</organism>
<gene>
    <name type="primary">IMP2</name>
    <name type="ordered locus">YMR035W</name>
    <name type="ORF">YM9973.09</name>
</gene>
<evidence type="ECO:0000250" key="1"/>
<evidence type="ECO:0000255" key="2"/>
<evidence type="ECO:0000269" key="3">
    <source>
    </source>
</evidence>
<evidence type="ECO:0000269" key="4">
    <source>
    </source>
</evidence>
<evidence type="ECO:0000269" key="5">
    <source>
    </source>
</evidence>
<evidence type="ECO:0000305" key="6"/>
<keyword id="KW-0903">Direct protein sequencing</keyword>
<keyword id="KW-0378">Hydrolase</keyword>
<keyword id="KW-0472">Membrane</keyword>
<keyword id="KW-0496">Mitochondrion</keyword>
<keyword id="KW-0999">Mitochondrion inner membrane</keyword>
<keyword id="KW-0645">Protease</keyword>
<keyword id="KW-1185">Reference proteome</keyword>
<keyword id="KW-0812">Transmembrane</keyword>
<keyword id="KW-1133">Transmembrane helix</keyword>
<comment type="function">
    <text evidence="4">Catalytic component of the mitochondrial inner membrane peptidase (IMP) complex. IMP catalyzes the removal of signal peptides required for the targeting of proteins from the mitochondrial matrix, across the inner membrane, into the inter-membrane space. The two catalytic IMP subunits seem to have non-overlapping substrate specificities. IMP2 substrates include nuclear encoded CYB2, mitochondrially encoded COX2 and cytochrome c1. Required for the stability of IMP1.</text>
</comment>
<comment type="subunit">
    <text evidence="5">Component of the mitochondrial inner membrane peptidase (IMP) complex which at least consists of IMP1, IMP2 and SOM1.</text>
</comment>
<comment type="interaction">
    <interactant intactId="EBI-9231">
        <id>P46972</id>
    </interactant>
    <interactant intactId="EBI-31799">
        <id>Q05930</id>
        <label>MDM30</label>
    </interactant>
    <organismsDiffer>false</organismsDiffer>
    <experiments>2</experiments>
</comment>
<comment type="subcellular location">
    <subcellularLocation>
        <location>Mitochondrion inner membrane</location>
        <topology>Single-pass membrane protein</topology>
    </subcellularLocation>
</comment>
<comment type="PTM">
    <text>The N-terminus is blocked.</text>
</comment>
<comment type="similarity">
    <text evidence="6">Belongs to the peptidase S26 family. IMP2 subfamily.</text>
</comment>
<proteinExistence type="evidence at protein level"/>
<feature type="chain" id="PRO_0000109538" description="Mitochondrial inner membrane protease subunit 2">
    <location>
        <begin position="1"/>
        <end position="177"/>
    </location>
</feature>
<feature type="transmembrane region" description="Helical" evidence="2">
    <location>
        <begin position="134"/>
        <end position="152"/>
    </location>
</feature>
<feature type="active site" evidence="1">
    <location>
        <position position="41"/>
    </location>
</feature>
<feature type="active site" evidence="1">
    <location>
        <position position="91"/>
    </location>
</feature>
<feature type="mutagenesis site" description="Abolishes enzymatic activity." evidence="3">
    <original>S</original>
    <variation>A</variation>
    <variation>T</variation>
    <location>
        <position position="41"/>
    </location>
</feature>
<feature type="mutagenesis site" description="Abolishes enzymatic activity." evidence="3">
    <original>K</original>
    <variation>H</variation>
    <variation>R</variation>
    <location>
        <position position="91"/>
    </location>
</feature>
<feature type="mutagenesis site" description="Reduces processing of CYB2 and presence of IMP1 and SOM1 in the IMP complex." evidence="4">
    <original>G</original>
    <variation>D</variation>
    <location>
        <position position="95"/>
    </location>
</feature>
<feature type="mutagenesis site" description="Reduces processing of cytochrome c1; no effect on presence of IMP1 and SOM1 in the IMP complex." evidence="4">
    <original>G</original>
    <variation>S</variation>
    <location>
        <position position="123"/>
    </location>
</feature>
<feature type="mutagenesis site" description="Abolishes enzymatic activity." evidence="3">
    <original>D</original>
    <variation>N</variation>
    <variation>Y</variation>
    <location>
        <position position="124"/>
    </location>
</feature>
<feature type="mutagenesis site" description="Abolishes enzymatic activity." evidence="3">
    <original>D</original>
    <variation>N</variation>
    <variation>E</variation>
    <location>
        <position position="131"/>
    </location>
</feature>